<name>YOS1_DICDI</name>
<keyword id="KW-0931">ER-Golgi transport</keyword>
<keyword id="KW-0472">Membrane</keyword>
<keyword id="KW-0653">Protein transport</keyword>
<keyword id="KW-1185">Reference proteome</keyword>
<keyword id="KW-0812">Transmembrane</keyword>
<keyword id="KW-1133">Transmembrane helix</keyword>
<keyword id="KW-0813">Transport</keyword>
<protein>
    <recommendedName>
        <fullName>Protein transport protein yos1</fullName>
    </recommendedName>
</protein>
<proteinExistence type="inferred from homology"/>
<evidence type="ECO:0000250" key="1">
    <source>
        <dbReference type="UniProtKB" id="Q3E834"/>
    </source>
</evidence>
<evidence type="ECO:0000255" key="2"/>
<evidence type="ECO:0000305" key="3"/>
<dbReference type="EMBL" id="AAFI02000031">
    <property type="protein sequence ID" value="EAL67678.1"/>
    <property type="molecule type" value="Genomic_DNA"/>
</dbReference>
<dbReference type="RefSeq" id="XP_641651.1">
    <property type="nucleotide sequence ID" value="XM_636559.1"/>
</dbReference>
<dbReference type="FunCoup" id="Q54WR6">
    <property type="interactions" value="2"/>
</dbReference>
<dbReference type="STRING" id="44689.Q54WR6"/>
<dbReference type="PaxDb" id="44689-DDB0205792"/>
<dbReference type="EnsemblProtists" id="EAL67678">
    <property type="protein sequence ID" value="EAL67678"/>
    <property type="gene ID" value="DDB_G0279479"/>
</dbReference>
<dbReference type="GeneID" id="8622058"/>
<dbReference type="KEGG" id="ddi:DDB_G0279479"/>
<dbReference type="dictyBase" id="DDB_G0279479"/>
<dbReference type="VEuPathDB" id="AmoebaDB:DDB_G0279479"/>
<dbReference type="eggNOG" id="ENOG502RII8">
    <property type="taxonomic scope" value="Eukaryota"/>
</dbReference>
<dbReference type="HOGENOM" id="CLU_2836572_0_0_1"/>
<dbReference type="InParanoid" id="Q54WR6"/>
<dbReference type="OMA" id="NKIGWGV"/>
<dbReference type="PRO" id="PR:Q54WR6"/>
<dbReference type="Proteomes" id="UP000002195">
    <property type="component" value="Chromosome 3"/>
</dbReference>
<dbReference type="GO" id="GO:0030134">
    <property type="term" value="C:COPII-coated ER to Golgi transport vesicle"/>
    <property type="evidence" value="ECO:0000318"/>
    <property type="project" value="GO_Central"/>
</dbReference>
<dbReference type="GO" id="GO:0005789">
    <property type="term" value="C:endoplasmic reticulum membrane"/>
    <property type="evidence" value="ECO:0000318"/>
    <property type="project" value="GO_Central"/>
</dbReference>
<dbReference type="GO" id="GO:0000139">
    <property type="term" value="C:Golgi membrane"/>
    <property type="evidence" value="ECO:0000318"/>
    <property type="project" value="GO_Central"/>
</dbReference>
<dbReference type="GO" id="GO:0006888">
    <property type="term" value="P:endoplasmic reticulum to Golgi vesicle-mediated transport"/>
    <property type="evidence" value="ECO:0000318"/>
    <property type="project" value="GO_Central"/>
</dbReference>
<dbReference type="GO" id="GO:0015031">
    <property type="term" value="P:protein transport"/>
    <property type="evidence" value="ECO:0007669"/>
    <property type="project" value="UniProtKB-KW"/>
</dbReference>
<dbReference type="InterPro" id="IPR013880">
    <property type="entry name" value="Yos1"/>
</dbReference>
<dbReference type="PANTHER" id="PTHR15858">
    <property type="entry name" value="IMMEDIATE EARLY RESPONSE 3-INTERACTING PROTEIN 1"/>
    <property type="match status" value="1"/>
</dbReference>
<dbReference type="PANTHER" id="PTHR15858:SF0">
    <property type="entry name" value="IMMEDIATE EARLY RESPONSE 3-INTERACTING PROTEIN 1"/>
    <property type="match status" value="1"/>
</dbReference>
<dbReference type="Pfam" id="PF08571">
    <property type="entry name" value="Yos1"/>
    <property type="match status" value="1"/>
</dbReference>
<reference key="1">
    <citation type="journal article" date="2005" name="Nature">
        <title>The genome of the social amoeba Dictyostelium discoideum.</title>
        <authorList>
            <person name="Eichinger L."/>
            <person name="Pachebat J.A."/>
            <person name="Gloeckner G."/>
            <person name="Rajandream M.A."/>
            <person name="Sucgang R."/>
            <person name="Berriman M."/>
            <person name="Song J."/>
            <person name="Olsen R."/>
            <person name="Szafranski K."/>
            <person name="Xu Q."/>
            <person name="Tunggal B."/>
            <person name="Kummerfeld S."/>
            <person name="Madera M."/>
            <person name="Konfortov B.A."/>
            <person name="Rivero F."/>
            <person name="Bankier A.T."/>
            <person name="Lehmann R."/>
            <person name="Hamlin N."/>
            <person name="Davies R."/>
            <person name="Gaudet P."/>
            <person name="Fey P."/>
            <person name="Pilcher K."/>
            <person name="Chen G."/>
            <person name="Saunders D."/>
            <person name="Sodergren E.J."/>
            <person name="Davis P."/>
            <person name="Kerhornou A."/>
            <person name="Nie X."/>
            <person name="Hall N."/>
            <person name="Anjard C."/>
            <person name="Hemphill L."/>
            <person name="Bason N."/>
            <person name="Farbrother P."/>
            <person name="Desany B."/>
            <person name="Just E."/>
            <person name="Morio T."/>
            <person name="Rost R."/>
            <person name="Churcher C.M."/>
            <person name="Cooper J."/>
            <person name="Haydock S."/>
            <person name="van Driessche N."/>
            <person name="Cronin A."/>
            <person name="Goodhead I."/>
            <person name="Muzny D.M."/>
            <person name="Mourier T."/>
            <person name="Pain A."/>
            <person name="Lu M."/>
            <person name="Harper D."/>
            <person name="Lindsay R."/>
            <person name="Hauser H."/>
            <person name="James K.D."/>
            <person name="Quiles M."/>
            <person name="Madan Babu M."/>
            <person name="Saito T."/>
            <person name="Buchrieser C."/>
            <person name="Wardroper A."/>
            <person name="Felder M."/>
            <person name="Thangavelu M."/>
            <person name="Johnson D."/>
            <person name="Knights A."/>
            <person name="Loulseged H."/>
            <person name="Mungall K.L."/>
            <person name="Oliver K."/>
            <person name="Price C."/>
            <person name="Quail M.A."/>
            <person name="Urushihara H."/>
            <person name="Hernandez J."/>
            <person name="Rabbinowitsch E."/>
            <person name="Steffen D."/>
            <person name="Sanders M."/>
            <person name="Ma J."/>
            <person name="Kohara Y."/>
            <person name="Sharp S."/>
            <person name="Simmonds M.N."/>
            <person name="Spiegler S."/>
            <person name="Tivey A."/>
            <person name="Sugano S."/>
            <person name="White B."/>
            <person name="Walker D."/>
            <person name="Woodward J.R."/>
            <person name="Winckler T."/>
            <person name="Tanaka Y."/>
            <person name="Shaulsky G."/>
            <person name="Schleicher M."/>
            <person name="Weinstock G.M."/>
            <person name="Rosenthal A."/>
            <person name="Cox E.C."/>
            <person name="Chisholm R.L."/>
            <person name="Gibbs R.A."/>
            <person name="Loomis W.F."/>
            <person name="Platzer M."/>
            <person name="Kay R.R."/>
            <person name="Williams J.G."/>
            <person name="Dear P.H."/>
            <person name="Noegel A.A."/>
            <person name="Barrell B.G."/>
            <person name="Kuspa A."/>
        </authorList>
    </citation>
    <scope>NUCLEOTIDE SEQUENCE [LARGE SCALE GENOMIC DNA]</scope>
    <source>
        <strain>AX4</strain>
    </source>
</reference>
<accession>Q54WR6</accession>
<comment type="function">
    <text evidence="1">May be involved in protein transport between endoplasmic reticulum and Golgi apparatus.</text>
</comment>
<comment type="subcellular location">
    <subcellularLocation>
        <location evidence="3">Membrane</location>
        <topology evidence="3">Single-pass membrane protein</topology>
    </subcellularLocation>
</comment>
<comment type="similarity">
    <text evidence="3">Belongs to the YOS1 family.</text>
</comment>
<gene>
    <name type="primary">yos1</name>
    <name type="ORF">DDB_G0279479</name>
</gene>
<organism>
    <name type="scientific">Dictyostelium discoideum</name>
    <name type="common">Social amoeba</name>
    <dbReference type="NCBI Taxonomy" id="44689"/>
    <lineage>
        <taxon>Eukaryota</taxon>
        <taxon>Amoebozoa</taxon>
        <taxon>Evosea</taxon>
        <taxon>Eumycetozoa</taxon>
        <taxon>Dictyostelia</taxon>
        <taxon>Dictyosteliales</taxon>
        <taxon>Dictyosteliaceae</taxon>
        <taxon>Dictyostelium</taxon>
    </lineage>
</organism>
<feature type="chain" id="PRO_0000351224" description="Protein transport protein yos1">
    <location>
        <begin position="1"/>
        <end position="66"/>
    </location>
</feature>
<feature type="transmembrane region" description="Helical" evidence="2">
    <location>
        <begin position="7"/>
        <end position="23"/>
    </location>
</feature>
<sequence>MIMLSFMGFLQSCLLIVNSFAILNERFLNKIGWGVKSDLDMNSFKGKIITLLHSLRFFFRSMFSNI</sequence>